<name>GT_BPN15</name>
<accession>O64329</accession>
<feature type="chain" id="PRO_0000432906" description="Tail assembly protein GT">
    <location>
        <begin position="1"/>
        <end position="250"/>
    </location>
</feature>
<proteinExistence type="inferred from homology"/>
<gene>
    <name evidence="4" type="primary">gene 15</name>
</gene>
<comment type="function">
    <text evidence="2">Promotes tail assembly by creating a scaffold for the tail tube proteins. Tail assembly proteins G and GT probably wrap the linear tape measure protein to create a tail assembly scaffold. This allows the polymerization of the tail tube protein, during which G and GT are released, therefore they are absent in the mature virion. The tail assembly protein GT is produced by a rare -1 ribosomal frameshift. The ratio of translated G/GT is about 20, and this ratio is important for proper tail assembly.</text>
</comment>
<comment type="subunit">
    <text evidence="2">Interacts (via C-terminus) with tail tube protein. Interacts (via N-terminus) with the tail assembly protein G and the tape measure protein.</text>
</comment>
<comment type="subcellular location">
    <subcellularLocation>
        <location evidence="2">Host cytoplasm</location>
    </subcellularLocation>
</comment>
<comment type="alternative products">
    <event type="ribosomal frameshifting"/>
    <isoform>
        <id>O64329-1</id>
        <name>Tail assembly protein GT</name>
        <sequence type="displayed"/>
    </isoform>
    <isoform>
        <id>O64328-1</id>
        <name>Tail assembly protein G</name>
        <sequence type="external"/>
    </isoform>
    <text evidence="1">The tail assembly protein GT is produced by a rare -1 ribosomal frameshift. This expression strategy assures a fixed ration of G/GT.</text>
</comment>
<comment type="miscellaneous">
    <molecule>Isoform Tail assembly protein GT</molecule>
    <text evidence="1">Frameshifted product of the GT gene, representing 3-4% of the translated protein.</text>
</comment>
<comment type="similarity">
    <text evidence="2">Belongs to the lambda-like tail assembly protein family.</text>
</comment>
<sequence>MFLKSELLECNGSSVTLFQLSALQRIEHLEYLKQLEAVEVGDFQAAITFTVKSGAYLVAMSLWHGHPLKGSQGENAAAEVAKIQDEVMQTWPTELVAEAEYKVKLLSGMIAPVIDEPTSSGEERNEPAEPVTAGKALASELKFAMKLAREFGRPDWRAMLAGMSSTEYGDWKIFYQDNYFHDAQLDAHFSGLLYTISTLFFADPELTPDSFSILSPAPEAIDIDDPDDDTLMAKAAGISGGVRYGPDGSR</sequence>
<protein>
    <recommendedName>
        <fullName evidence="2 3">Tail assembly protein GT</fullName>
    </recommendedName>
    <alternativeName>
        <fullName evidence="2">Gene product 15</fullName>
        <shortName evidence="2">gp15</shortName>
    </alternativeName>
    <alternativeName>
        <fullName evidence="2">Gene product GT</fullName>
        <shortName evidence="2">gpGT</shortName>
    </alternativeName>
    <alternativeName>
        <fullName evidence="2">Minor tail protein GT</fullName>
    </alternativeName>
</protein>
<organismHost>
    <name type="scientific">Escherichia coli</name>
    <dbReference type="NCBI Taxonomy" id="562"/>
</organismHost>
<organism evidence="5">
    <name type="scientific">Escherichia phage N15</name>
    <name type="common">Bacteriophage N15</name>
    <dbReference type="NCBI Taxonomy" id="1604876"/>
    <lineage>
        <taxon>Viruses</taxon>
        <taxon>Duplodnaviria</taxon>
        <taxon>Heunggongvirae</taxon>
        <taxon>Uroviricota</taxon>
        <taxon>Caudoviricetes</taxon>
        <taxon>Ravinvirus</taxon>
        <taxon>Ravinvirus N15</taxon>
    </lineage>
</organism>
<evidence type="ECO:0000250" key="1">
    <source>
        <dbReference type="UniProtKB" id="P03735"/>
    </source>
</evidence>
<evidence type="ECO:0000255" key="2">
    <source>
        <dbReference type="HAMAP-Rule" id="MF_04134"/>
    </source>
</evidence>
<evidence type="ECO:0000303" key="3">
    <source>
    </source>
</evidence>
<evidence type="ECO:0000312" key="4">
    <source>
        <dbReference type="EMBL" id="AAC19051.1"/>
    </source>
</evidence>
<evidence type="ECO:0000312" key="5">
    <source>
        <dbReference type="Proteomes" id="UP000002132"/>
    </source>
</evidence>
<dbReference type="EMBL" id="AF064539">
    <property type="protein sequence ID" value="AAC19051.1"/>
    <property type="molecule type" value="Genomic_DNA"/>
</dbReference>
<dbReference type="PIR" id="T13101">
    <property type="entry name" value="T13101"/>
</dbReference>
<dbReference type="KEGG" id="vg:1261654"/>
<dbReference type="Proteomes" id="UP000002132">
    <property type="component" value="Genome"/>
</dbReference>
<dbReference type="GO" id="GO:0030430">
    <property type="term" value="C:host cell cytoplasm"/>
    <property type="evidence" value="ECO:0007669"/>
    <property type="project" value="UniProtKB-SubCell"/>
</dbReference>
<dbReference type="GO" id="GO:0098003">
    <property type="term" value="P:viral tail assembly"/>
    <property type="evidence" value="ECO:0007669"/>
    <property type="project" value="UniProtKB-UniRule"/>
</dbReference>
<dbReference type="GO" id="GO:0075523">
    <property type="term" value="P:viral translational frameshifting"/>
    <property type="evidence" value="ECO:0007669"/>
    <property type="project" value="UniProtKB-KW"/>
</dbReference>
<dbReference type="HAMAP" id="MF_04134">
    <property type="entry name" value="GT_LAMBD"/>
    <property type="match status" value="2"/>
</dbReference>
<dbReference type="InterPro" id="IPR009350">
    <property type="entry name" value="Phage_tail_T"/>
</dbReference>
<dbReference type="InterPro" id="IPR010027">
    <property type="entry name" value="Tail_assembly_G"/>
</dbReference>
<dbReference type="InterPro" id="IPR043704">
    <property type="entry name" value="Tail_assembly_GT"/>
</dbReference>
<dbReference type="NCBIfam" id="TIGR01715">
    <property type="entry name" value="phage_lam_T"/>
    <property type="match status" value="1"/>
</dbReference>
<dbReference type="NCBIfam" id="TIGR01674">
    <property type="entry name" value="phage_lambda_G"/>
    <property type="match status" value="1"/>
</dbReference>
<dbReference type="Pfam" id="PF06894">
    <property type="entry name" value="Phage_TAC_2"/>
    <property type="match status" value="1"/>
</dbReference>
<dbReference type="Pfam" id="PF06223">
    <property type="entry name" value="Phage_tail_T"/>
    <property type="match status" value="1"/>
</dbReference>
<reference key="1">
    <citation type="journal article" date="2000" name="J. Mol. Biol.">
        <title>Genomic sequence and analysis of the atypical temperate bacteriophage N15.</title>
        <authorList>
            <person name="Ravin V."/>
            <person name="Ravin N."/>
            <person name="Casjens S."/>
            <person name="Ford M.E."/>
            <person name="Hatfull G.F."/>
            <person name="Hendrix R.W."/>
        </authorList>
    </citation>
    <scope>NUCLEOTIDE SEQUENCE [LARGE SCALE GENOMIC DNA]</scope>
    <scope>IDENTIFICATION</scope>
</reference>
<keyword id="KW-1035">Host cytoplasm</keyword>
<keyword id="KW-0426">Late protein</keyword>
<keyword id="KW-1185">Reference proteome</keyword>
<keyword id="KW-0688">Ribosomal frameshifting</keyword>
<keyword id="KW-1188">Viral release from host cell</keyword>
<keyword id="KW-1245">Viral tail assembly</keyword>